<evidence type="ECO:0000255" key="1"/>
<evidence type="ECO:0000256" key="2">
    <source>
        <dbReference type="SAM" id="MobiDB-lite"/>
    </source>
</evidence>
<evidence type="ECO:0000305" key="3"/>
<protein>
    <recommendedName>
        <fullName>Golgin subfamily A member 6D</fullName>
    </recommendedName>
</protein>
<accession>P0CG33</accession>
<feature type="chain" id="PRO_0000395400" description="Golgin subfamily A member 6D">
    <location>
        <begin position="1"/>
        <end position="693"/>
    </location>
</feature>
<feature type="region of interest" description="Disordered" evidence="2">
    <location>
        <begin position="20"/>
        <end position="70"/>
    </location>
</feature>
<feature type="region of interest" description="Disordered" evidence="2">
    <location>
        <begin position="497"/>
        <end position="547"/>
    </location>
</feature>
<feature type="region of interest" description="Disordered" evidence="2">
    <location>
        <begin position="662"/>
        <end position="693"/>
    </location>
</feature>
<feature type="coiled-coil region" evidence="1">
    <location>
        <begin position="14"/>
        <end position="611"/>
    </location>
</feature>
<feature type="compositionally biased region" description="Basic and acidic residues" evidence="2">
    <location>
        <begin position="537"/>
        <end position="547"/>
    </location>
</feature>
<feature type="compositionally biased region" description="Polar residues" evidence="2">
    <location>
        <begin position="674"/>
        <end position="693"/>
    </location>
</feature>
<sequence>MWPQPYLPPHPMMLEESRQNKLAAAKKKLKEYQQRKSPGIPAGAKTKKKKTDSSPETTTSGGGHSPGDSQYQELAVALESSSVTINQLNENIESLKQQKKQVEHQLEEAKKTNNEIHKAQMEQLETINILTLEKADLKTTLYHTKRAARHFEEESKDLAGRLQYSLQHIQELERALCAVSTQQQEEDRSSSCREAVLQRRLQQTIKERALLNAHVTQVTESLKQVQLERDEYAKHIKGERARWQERMWKMSVEARTLKEEKKRDIHRIQELERSLSELKNQMAEPPSLAPPAVTSVVEQLQDEAKHLRQEVEGLEGKLQSQVENNQALSLLSKEQKQRLQEQEEMLREQEAQRVREQERLCEQNERLREQQKTLQEQGERLRKQEQRLRKQEERLRKEEERLQKQEKRLWDQEERLWKKEERLQKQEERLALSQNHKLDKQLAEPQCSFEDLNNEKKSALQLEQQVKELQEKLDEEHLEAASQRNQQLETQLSLVALPGEGDGGQHLDSEEEEAPRPTPNIPEDLESREATSSFMDLPKEKADGTEQVERRELGFVQPSGVTDGMRESFTVYESQGAVPNTRHQEMEDVIRLAQKEEEMKVKLLELQELVLPLVGNHEGHGKFLIAAQNPADEPTPGAPAPQELGAAGEQDVFYEVSLDNNVEPAPGVAREGSPHNNPTVQQIVQLSPVMQDT</sequence>
<reference key="1">
    <citation type="journal article" date="2006" name="Nature">
        <title>Analysis of the DNA sequence and duplication history of human chromosome 15.</title>
        <authorList>
            <person name="Zody M.C."/>
            <person name="Garber M."/>
            <person name="Sharpe T."/>
            <person name="Young S.K."/>
            <person name="Rowen L."/>
            <person name="O'Neill K."/>
            <person name="Whittaker C.A."/>
            <person name="Kamal M."/>
            <person name="Chang J.L."/>
            <person name="Cuomo C.A."/>
            <person name="Dewar K."/>
            <person name="FitzGerald M.G."/>
            <person name="Kodira C.D."/>
            <person name="Madan A."/>
            <person name="Qin S."/>
            <person name="Yang X."/>
            <person name="Abbasi N."/>
            <person name="Abouelleil A."/>
            <person name="Arachchi H.M."/>
            <person name="Baradarani L."/>
            <person name="Birditt B."/>
            <person name="Bloom S."/>
            <person name="Bloom T."/>
            <person name="Borowsky M.L."/>
            <person name="Burke J."/>
            <person name="Butler J."/>
            <person name="Cook A."/>
            <person name="DeArellano K."/>
            <person name="DeCaprio D."/>
            <person name="Dorris L. III"/>
            <person name="Dors M."/>
            <person name="Eichler E.E."/>
            <person name="Engels R."/>
            <person name="Fahey J."/>
            <person name="Fleetwood P."/>
            <person name="Friedman C."/>
            <person name="Gearin G."/>
            <person name="Hall J.L."/>
            <person name="Hensley G."/>
            <person name="Johnson E."/>
            <person name="Jones C."/>
            <person name="Kamat A."/>
            <person name="Kaur A."/>
            <person name="Locke D.P."/>
            <person name="Madan A."/>
            <person name="Munson G."/>
            <person name="Jaffe D.B."/>
            <person name="Lui A."/>
            <person name="Macdonald P."/>
            <person name="Mauceli E."/>
            <person name="Naylor J.W."/>
            <person name="Nesbitt R."/>
            <person name="Nicol R."/>
            <person name="O'Leary S.B."/>
            <person name="Ratcliffe A."/>
            <person name="Rounsley S."/>
            <person name="She X."/>
            <person name="Sneddon K.M.B."/>
            <person name="Stewart S."/>
            <person name="Sougnez C."/>
            <person name="Stone S.M."/>
            <person name="Topham K."/>
            <person name="Vincent D."/>
            <person name="Wang S."/>
            <person name="Zimmer A.R."/>
            <person name="Birren B.W."/>
            <person name="Hood L."/>
            <person name="Lander E.S."/>
            <person name="Nusbaum C."/>
        </authorList>
    </citation>
    <scope>NUCLEOTIDE SEQUENCE [LARGE SCALE GENOMIC DNA]</scope>
</reference>
<organism>
    <name type="scientific">Homo sapiens</name>
    <name type="common">Human</name>
    <dbReference type="NCBI Taxonomy" id="9606"/>
    <lineage>
        <taxon>Eukaryota</taxon>
        <taxon>Metazoa</taxon>
        <taxon>Chordata</taxon>
        <taxon>Craniata</taxon>
        <taxon>Vertebrata</taxon>
        <taxon>Euteleostomi</taxon>
        <taxon>Mammalia</taxon>
        <taxon>Eutheria</taxon>
        <taxon>Euarchontoglires</taxon>
        <taxon>Primates</taxon>
        <taxon>Haplorrhini</taxon>
        <taxon>Catarrhini</taxon>
        <taxon>Hominidae</taxon>
        <taxon>Homo</taxon>
    </lineage>
</organism>
<comment type="similarity">
    <text evidence="3">Belongs to the GOLGA6 family.</text>
</comment>
<comment type="caution">
    <text evidence="3">Maps to a duplicated region on chromosome 15; the gene is present in at least 4 almost identical copies.</text>
</comment>
<dbReference type="EMBL" id="AC068338">
    <property type="status" value="NOT_ANNOTATED_CDS"/>
    <property type="molecule type" value="Genomic_DNA"/>
</dbReference>
<dbReference type="CCDS" id="CCDS45308.1"/>
<dbReference type="RefSeq" id="NP_001138696.1">
    <property type="nucleotide sequence ID" value="NM_001145224.3"/>
</dbReference>
<dbReference type="RefSeq" id="XP_047288921.1">
    <property type="nucleotide sequence ID" value="XM_047432965.1"/>
</dbReference>
<dbReference type="RefSeq" id="XP_054234634.1">
    <property type="nucleotide sequence ID" value="XM_054378659.1"/>
</dbReference>
<dbReference type="SMR" id="P0CG33"/>
<dbReference type="BioGRID" id="575951">
    <property type="interactions" value="2"/>
</dbReference>
<dbReference type="FunCoup" id="P0CG33">
    <property type="interactions" value="17"/>
</dbReference>
<dbReference type="IntAct" id="P0CG33">
    <property type="interactions" value="1"/>
</dbReference>
<dbReference type="STRING" id="9606.ENSP00000391085"/>
<dbReference type="GlyGen" id="P0CG33">
    <property type="glycosylation" value="1 site"/>
</dbReference>
<dbReference type="iPTMnet" id="P0CG33"/>
<dbReference type="PhosphoSitePlus" id="P0CG33"/>
<dbReference type="BioMuta" id="GOLGA6D"/>
<dbReference type="DMDM" id="300680959"/>
<dbReference type="jPOST" id="P0CG33"/>
<dbReference type="MassIVE" id="P0CG33"/>
<dbReference type="PaxDb" id="9606-ENSP00000391085"/>
<dbReference type="PeptideAtlas" id="P0CG33"/>
<dbReference type="ProteomicsDB" id="52463"/>
<dbReference type="DNASU" id="653643"/>
<dbReference type="Ensembl" id="ENST00000434739.4">
    <property type="protein sequence ID" value="ENSP00000391085.3"/>
    <property type="gene ID" value="ENSG00000140478.17"/>
</dbReference>
<dbReference type="GeneID" id="653643"/>
<dbReference type="KEGG" id="hsa:653643"/>
<dbReference type="MANE-Select" id="ENST00000434739.4">
    <property type="protein sequence ID" value="ENSP00000391085.3"/>
    <property type="RefSeq nucleotide sequence ID" value="NM_001145224.3"/>
    <property type="RefSeq protein sequence ID" value="NP_001138696.1"/>
</dbReference>
<dbReference type="UCSC" id="uc010uma.3">
    <property type="organism name" value="human"/>
</dbReference>
<dbReference type="AGR" id="HGNC:32204"/>
<dbReference type="CTD" id="653643"/>
<dbReference type="GeneCards" id="GOLGA6D"/>
<dbReference type="HGNC" id="HGNC:32204">
    <property type="gene designation" value="GOLGA6D"/>
</dbReference>
<dbReference type="HPA" id="ENSG00000140478">
    <property type="expression patterns" value="Tissue enriched (testis)"/>
</dbReference>
<dbReference type="neXtProt" id="NX_P0CG33"/>
<dbReference type="PharmGKB" id="PA162389960"/>
<dbReference type="VEuPathDB" id="HostDB:ENSG00000140478"/>
<dbReference type="eggNOG" id="KOG4725">
    <property type="taxonomic scope" value="Eukaryota"/>
</dbReference>
<dbReference type="GeneTree" id="ENSGT00530000062932"/>
<dbReference type="InParanoid" id="P0CG33"/>
<dbReference type="OMA" id="ANSEIHK"/>
<dbReference type="OrthoDB" id="9538952at2759"/>
<dbReference type="PAN-GO" id="P0CG33">
    <property type="GO annotations" value="4 GO annotations based on evolutionary models"/>
</dbReference>
<dbReference type="PhylomeDB" id="P0CG33"/>
<dbReference type="TreeFam" id="TF316990"/>
<dbReference type="SignaLink" id="P0CG33"/>
<dbReference type="BioGRID-ORCS" id="653643">
    <property type="hits" value="42 hits in 598 CRISPR screens"/>
</dbReference>
<dbReference type="GenomeRNAi" id="653643"/>
<dbReference type="Pharos" id="P0CG33">
    <property type="development level" value="Tdark"/>
</dbReference>
<dbReference type="PRO" id="PR:P0CG33"/>
<dbReference type="Proteomes" id="UP000005640">
    <property type="component" value="Chromosome 15"/>
</dbReference>
<dbReference type="RNAct" id="P0CG33">
    <property type="molecule type" value="protein"/>
</dbReference>
<dbReference type="Bgee" id="ENSG00000140478">
    <property type="expression patterns" value="Expressed in male germ line stem cell (sensu Vertebrata) in testis and 32 other cell types or tissues"/>
</dbReference>
<dbReference type="ExpressionAtlas" id="P0CG33">
    <property type="expression patterns" value="baseline and differential"/>
</dbReference>
<dbReference type="GO" id="GO:0005801">
    <property type="term" value="C:cis-Golgi network"/>
    <property type="evidence" value="ECO:0000318"/>
    <property type="project" value="GO_Central"/>
</dbReference>
<dbReference type="GO" id="GO:0000137">
    <property type="term" value="C:Golgi cis cisterna"/>
    <property type="evidence" value="ECO:0000318"/>
    <property type="project" value="GO_Central"/>
</dbReference>
<dbReference type="GO" id="GO:0032580">
    <property type="term" value="C:Golgi cisterna membrane"/>
    <property type="evidence" value="ECO:0000318"/>
    <property type="project" value="GO_Central"/>
</dbReference>
<dbReference type="GO" id="GO:0007030">
    <property type="term" value="P:Golgi organization"/>
    <property type="evidence" value="ECO:0000318"/>
    <property type="project" value="GO_Central"/>
</dbReference>
<dbReference type="InterPro" id="IPR043976">
    <property type="entry name" value="GOLGA_cons_dom"/>
</dbReference>
<dbReference type="InterPro" id="IPR024858">
    <property type="entry name" value="Golgin_A"/>
</dbReference>
<dbReference type="PANTHER" id="PTHR10881:SF44">
    <property type="entry name" value="GOLGIN SUBFAMILY A MEMBER 6A-RELATED"/>
    <property type="match status" value="1"/>
</dbReference>
<dbReference type="PANTHER" id="PTHR10881">
    <property type="entry name" value="GOLGIN SUBFAMILY A MEMBER-RELATED"/>
    <property type="match status" value="1"/>
</dbReference>
<dbReference type="Pfam" id="PF15070">
    <property type="entry name" value="GOLGA2L5"/>
    <property type="match status" value="3"/>
</dbReference>
<gene>
    <name type="primary">GOLGA6D</name>
</gene>
<keyword id="KW-0175">Coiled coil</keyword>
<keyword id="KW-1267">Proteomics identification</keyword>
<keyword id="KW-1185">Reference proteome</keyword>
<proteinExistence type="evidence at protein level"/>
<name>GOG6D_HUMAN</name>